<feature type="chain" id="PRO_0000375544" description="Succinyl-diaminopimelate desuccinylase">
    <location>
        <begin position="1"/>
        <end position="380"/>
    </location>
</feature>
<feature type="active site" evidence="1">
    <location>
        <position position="73"/>
    </location>
</feature>
<feature type="active site" description="Proton acceptor" evidence="1">
    <location>
        <position position="136"/>
    </location>
</feature>
<feature type="binding site" evidence="1">
    <location>
        <position position="71"/>
    </location>
    <ligand>
        <name>Zn(2+)</name>
        <dbReference type="ChEBI" id="CHEBI:29105"/>
        <label>1</label>
    </ligand>
</feature>
<feature type="binding site" evidence="1">
    <location>
        <position position="104"/>
    </location>
    <ligand>
        <name>Zn(2+)</name>
        <dbReference type="ChEBI" id="CHEBI:29105"/>
        <label>1</label>
    </ligand>
</feature>
<feature type="binding site" evidence="1">
    <location>
        <position position="104"/>
    </location>
    <ligand>
        <name>Zn(2+)</name>
        <dbReference type="ChEBI" id="CHEBI:29105"/>
        <label>2</label>
    </ligand>
</feature>
<feature type="binding site" evidence="1">
    <location>
        <position position="137"/>
    </location>
    <ligand>
        <name>Zn(2+)</name>
        <dbReference type="ChEBI" id="CHEBI:29105"/>
        <label>2</label>
    </ligand>
</feature>
<feature type="binding site" evidence="1">
    <location>
        <position position="166"/>
    </location>
    <ligand>
        <name>Zn(2+)</name>
        <dbReference type="ChEBI" id="CHEBI:29105"/>
        <label>1</label>
    </ligand>
</feature>
<feature type="binding site" evidence="1">
    <location>
        <position position="351"/>
    </location>
    <ligand>
        <name>Zn(2+)</name>
        <dbReference type="ChEBI" id="CHEBI:29105"/>
        <label>2</label>
    </ligand>
</feature>
<proteinExistence type="inferred from homology"/>
<protein>
    <recommendedName>
        <fullName evidence="1">Succinyl-diaminopimelate desuccinylase</fullName>
        <shortName evidence="1">SDAP desuccinylase</shortName>
        <ecNumber evidence="1">3.5.1.18</ecNumber>
    </recommendedName>
    <alternativeName>
        <fullName evidence="1">N-succinyl-LL-2,6-diaminoheptanedioate amidohydrolase</fullName>
    </alternativeName>
</protein>
<reference key="1">
    <citation type="journal article" date="2006" name="J. Bacteriol.">
        <title>The genome of the obligately intracellular bacterium Ehrlichia canis reveals themes of complex membrane structure and immune evasion strategies.</title>
        <authorList>
            <person name="Mavromatis K."/>
            <person name="Doyle C.K."/>
            <person name="Lykidis A."/>
            <person name="Ivanova N."/>
            <person name="Francino M.P."/>
            <person name="Chain P."/>
            <person name="Shin M."/>
            <person name="Malfatti S."/>
            <person name="Larimer F."/>
            <person name="Copeland A."/>
            <person name="Detter J.C."/>
            <person name="Land M."/>
            <person name="Richardson P.M."/>
            <person name="Yu X.J."/>
            <person name="Walker D.H."/>
            <person name="McBride J.W."/>
            <person name="Kyrpides N.C."/>
        </authorList>
    </citation>
    <scope>NUCLEOTIDE SEQUENCE [LARGE SCALE GENOMIC DNA]</scope>
    <source>
        <strain>Jake</strain>
    </source>
</reference>
<keyword id="KW-0028">Amino-acid biosynthesis</keyword>
<keyword id="KW-0170">Cobalt</keyword>
<keyword id="KW-0220">Diaminopimelate biosynthesis</keyword>
<keyword id="KW-0378">Hydrolase</keyword>
<keyword id="KW-0457">Lysine biosynthesis</keyword>
<keyword id="KW-0479">Metal-binding</keyword>
<keyword id="KW-0862">Zinc</keyword>
<name>DAPE_EHRCJ</name>
<accession>Q3YT10</accession>
<organism>
    <name type="scientific">Ehrlichia canis (strain Jake)</name>
    <dbReference type="NCBI Taxonomy" id="269484"/>
    <lineage>
        <taxon>Bacteria</taxon>
        <taxon>Pseudomonadati</taxon>
        <taxon>Pseudomonadota</taxon>
        <taxon>Alphaproteobacteria</taxon>
        <taxon>Rickettsiales</taxon>
        <taxon>Anaplasmataceae</taxon>
        <taxon>Ehrlichia</taxon>
    </lineage>
</organism>
<gene>
    <name evidence="1" type="primary">dapE</name>
    <name type="ordered locus">Ecaj_0094</name>
</gene>
<dbReference type="EC" id="3.5.1.18" evidence="1"/>
<dbReference type="EMBL" id="CP000107">
    <property type="protein sequence ID" value="AAZ68145.1"/>
    <property type="status" value="ALT_INIT"/>
    <property type="molecule type" value="Genomic_DNA"/>
</dbReference>
<dbReference type="RefSeq" id="WP_044261945.1">
    <property type="nucleotide sequence ID" value="NC_007354.1"/>
</dbReference>
<dbReference type="SMR" id="Q3YT10"/>
<dbReference type="FunCoup" id="Q3YT10">
    <property type="interactions" value="228"/>
</dbReference>
<dbReference type="STRING" id="269484.Ecaj_0094"/>
<dbReference type="KEGG" id="ecn:Ecaj_0094"/>
<dbReference type="eggNOG" id="COG0624">
    <property type="taxonomic scope" value="Bacteria"/>
</dbReference>
<dbReference type="HOGENOM" id="CLU_021802_4_0_5"/>
<dbReference type="InParanoid" id="Q3YT10"/>
<dbReference type="UniPathway" id="UPA00034">
    <property type="reaction ID" value="UER00021"/>
</dbReference>
<dbReference type="Proteomes" id="UP000000435">
    <property type="component" value="Chromosome"/>
</dbReference>
<dbReference type="GO" id="GO:0008777">
    <property type="term" value="F:acetylornithine deacetylase activity"/>
    <property type="evidence" value="ECO:0007669"/>
    <property type="project" value="TreeGrafter"/>
</dbReference>
<dbReference type="GO" id="GO:0050897">
    <property type="term" value="F:cobalt ion binding"/>
    <property type="evidence" value="ECO:0007669"/>
    <property type="project" value="UniProtKB-UniRule"/>
</dbReference>
<dbReference type="GO" id="GO:0009014">
    <property type="term" value="F:succinyl-diaminopimelate desuccinylase activity"/>
    <property type="evidence" value="ECO:0007669"/>
    <property type="project" value="UniProtKB-UniRule"/>
</dbReference>
<dbReference type="GO" id="GO:0008270">
    <property type="term" value="F:zinc ion binding"/>
    <property type="evidence" value="ECO:0007669"/>
    <property type="project" value="UniProtKB-UniRule"/>
</dbReference>
<dbReference type="GO" id="GO:0019877">
    <property type="term" value="P:diaminopimelate biosynthetic process"/>
    <property type="evidence" value="ECO:0007669"/>
    <property type="project" value="UniProtKB-UniRule"/>
</dbReference>
<dbReference type="GO" id="GO:0006526">
    <property type="term" value="P:L-arginine biosynthetic process"/>
    <property type="evidence" value="ECO:0007669"/>
    <property type="project" value="TreeGrafter"/>
</dbReference>
<dbReference type="GO" id="GO:0009089">
    <property type="term" value="P:lysine biosynthetic process via diaminopimelate"/>
    <property type="evidence" value="ECO:0007669"/>
    <property type="project" value="UniProtKB-UniRule"/>
</dbReference>
<dbReference type="CDD" id="cd03891">
    <property type="entry name" value="M20_DapE_proteobac"/>
    <property type="match status" value="1"/>
</dbReference>
<dbReference type="Gene3D" id="3.40.630.10">
    <property type="entry name" value="Zn peptidases"/>
    <property type="match status" value="2"/>
</dbReference>
<dbReference type="HAMAP" id="MF_01690">
    <property type="entry name" value="DapE"/>
    <property type="match status" value="1"/>
</dbReference>
<dbReference type="InterPro" id="IPR036264">
    <property type="entry name" value="Bact_exopeptidase_dim_dom"/>
</dbReference>
<dbReference type="InterPro" id="IPR005941">
    <property type="entry name" value="DapE_proteobac"/>
</dbReference>
<dbReference type="InterPro" id="IPR002933">
    <property type="entry name" value="Peptidase_M20"/>
</dbReference>
<dbReference type="InterPro" id="IPR011650">
    <property type="entry name" value="Peptidase_M20_dimer"/>
</dbReference>
<dbReference type="InterPro" id="IPR050072">
    <property type="entry name" value="Peptidase_M20A"/>
</dbReference>
<dbReference type="NCBIfam" id="TIGR01246">
    <property type="entry name" value="dapE_proteo"/>
    <property type="match status" value="1"/>
</dbReference>
<dbReference type="NCBIfam" id="NF009557">
    <property type="entry name" value="PRK13009.1"/>
    <property type="match status" value="1"/>
</dbReference>
<dbReference type="PANTHER" id="PTHR43808">
    <property type="entry name" value="ACETYLORNITHINE DEACETYLASE"/>
    <property type="match status" value="1"/>
</dbReference>
<dbReference type="PANTHER" id="PTHR43808:SF31">
    <property type="entry name" value="N-ACETYL-L-CITRULLINE DEACETYLASE"/>
    <property type="match status" value="1"/>
</dbReference>
<dbReference type="Pfam" id="PF07687">
    <property type="entry name" value="M20_dimer"/>
    <property type="match status" value="1"/>
</dbReference>
<dbReference type="Pfam" id="PF01546">
    <property type="entry name" value="Peptidase_M20"/>
    <property type="match status" value="1"/>
</dbReference>
<dbReference type="SUPFAM" id="SSF55031">
    <property type="entry name" value="Bacterial exopeptidase dimerisation domain"/>
    <property type="match status" value="1"/>
</dbReference>
<dbReference type="SUPFAM" id="SSF53187">
    <property type="entry name" value="Zn-dependent exopeptidases"/>
    <property type="match status" value="1"/>
</dbReference>
<comment type="function">
    <text evidence="1">Catalyzes the hydrolysis of N-succinyl-L,L-diaminopimelic acid (SDAP), forming succinate and LL-2,6-diaminopimelate (DAP), an intermediate involved in the bacterial biosynthesis of lysine and meso-diaminopimelic acid, an essential component of bacterial cell walls.</text>
</comment>
<comment type="catalytic activity">
    <reaction evidence="1">
        <text>N-succinyl-(2S,6S)-2,6-diaminopimelate + H2O = (2S,6S)-2,6-diaminopimelate + succinate</text>
        <dbReference type="Rhea" id="RHEA:22608"/>
        <dbReference type="ChEBI" id="CHEBI:15377"/>
        <dbReference type="ChEBI" id="CHEBI:30031"/>
        <dbReference type="ChEBI" id="CHEBI:57609"/>
        <dbReference type="ChEBI" id="CHEBI:58087"/>
        <dbReference type="EC" id="3.5.1.18"/>
    </reaction>
</comment>
<comment type="cofactor">
    <cofactor evidence="1">
        <name>Zn(2+)</name>
        <dbReference type="ChEBI" id="CHEBI:29105"/>
    </cofactor>
    <cofactor evidence="1">
        <name>Co(2+)</name>
        <dbReference type="ChEBI" id="CHEBI:48828"/>
    </cofactor>
    <text evidence="1">Binds 2 Zn(2+) or Co(2+) ions per subunit.</text>
</comment>
<comment type="pathway">
    <text evidence="1">Amino-acid biosynthesis; L-lysine biosynthesis via DAP pathway; LL-2,6-diaminopimelate from (S)-tetrahydrodipicolinate (succinylase route): step 3/3.</text>
</comment>
<comment type="subunit">
    <text evidence="1">Homodimer.</text>
</comment>
<comment type="similarity">
    <text evidence="1">Belongs to the peptidase M20A family. DapE subfamily.</text>
</comment>
<comment type="sequence caution" evidence="2">
    <conflict type="erroneous initiation">
        <sequence resource="EMBL-CDS" id="AAZ68145"/>
    </conflict>
</comment>
<evidence type="ECO:0000255" key="1">
    <source>
        <dbReference type="HAMAP-Rule" id="MF_01690"/>
    </source>
</evidence>
<evidence type="ECO:0000305" key="2"/>
<sequence length="380" mass="41738">MAIDPIKLSQELISFPSITPTDNGAIDFLSNTLSQYGFTCHVLTFGDDQVQVRNLYAQLGNGSPNLCFAGHTDVVPTGDSEKWKFDPFSGKIEDNILYGRGVVDMKSAICAFVAAVSRIDFNQINGSISFLISGDEEGNYFKYGTPAVLKWLTDNNKKIDFCLVGEPTSQSSVGDTIKIGRRGSINFKIVCNGVQGHVAYPHLAENPVDNMISILYKISNTVLDNGNEYFQPSNCEITSVDVGNTATNVIPDKITANLNIRYNDMHTSESLFNIINNICAEITEKYELFTAVSGSSFITHPGKHSDMLSSAIKKVTGQDAILSTSGGTSDARFIKDFCPVIELGLSNETAHKINEHAPVDDIYKLTDIYEEFIRQFFNIS</sequence>